<sequence>MTDNSKIRVVVGMSGGVDSSVTALLLKEQGYDVIGVFMKNWDDTDEFGVCTATEDYKDVAAVADQIGIPYYSVNFEKEYWDRVFEYFLAEYRAGRTPNPDVMCNKEIKFKAFLDYAMTLGADYVATGHYAQVKRDENGTVHMLRGADNGKDQTYFLSQLSQEQLQKTLFPLGHLQKSEVREIAERAGLATAKKKDSTGICFIGEKNFKQFLSQYLPAQKGRMMTIDGRDMGEHAGLMYYTIGQRGGLGIGGQHGGDNQPWFVVGKDLSQNILYVGQGFYHEALMSNSLDASVIHFTREMPEEFTFECTAKFRYRQPDSQVTVHVRGDKAEVVFAEPQRAITPGQAVVFYDGKECLGGGMIDMAYKNGQPCQYI</sequence>
<protein>
    <recommendedName>
        <fullName evidence="1">tRNA-specific 2-thiouridylase MnmA</fullName>
        <ecNumber evidence="1">2.8.1.13</ecNumber>
    </recommendedName>
</protein>
<feature type="chain" id="PRO_0000349815" description="tRNA-specific 2-thiouridylase MnmA">
    <location>
        <begin position="1"/>
        <end position="373"/>
    </location>
</feature>
<feature type="region of interest" description="Interaction with target base in tRNA" evidence="1">
    <location>
        <begin position="98"/>
        <end position="100"/>
    </location>
</feature>
<feature type="region of interest" description="Interaction with tRNA" evidence="1">
    <location>
        <begin position="150"/>
        <end position="152"/>
    </location>
</feature>
<feature type="region of interest" description="Interaction with tRNA" evidence="1">
    <location>
        <begin position="312"/>
        <end position="313"/>
    </location>
</feature>
<feature type="active site" description="Nucleophile" evidence="1">
    <location>
        <position position="103"/>
    </location>
</feature>
<feature type="active site" description="Cysteine persulfide intermediate" evidence="1">
    <location>
        <position position="200"/>
    </location>
</feature>
<feature type="binding site" evidence="1">
    <location>
        <begin position="12"/>
        <end position="19"/>
    </location>
    <ligand>
        <name>ATP</name>
        <dbReference type="ChEBI" id="CHEBI:30616"/>
    </ligand>
</feature>
<feature type="binding site" evidence="1">
    <location>
        <position position="38"/>
    </location>
    <ligand>
        <name>ATP</name>
        <dbReference type="ChEBI" id="CHEBI:30616"/>
    </ligand>
</feature>
<feature type="binding site" evidence="1">
    <location>
        <position position="127"/>
    </location>
    <ligand>
        <name>ATP</name>
        <dbReference type="ChEBI" id="CHEBI:30616"/>
    </ligand>
</feature>
<feature type="site" description="Interaction with tRNA" evidence="1">
    <location>
        <position position="128"/>
    </location>
</feature>
<feature type="site" description="Interaction with tRNA" evidence="1">
    <location>
        <position position="344"/>
    </location>
</feature>
<feature type="disulfide bond" description="Alternate" evidence="1">
    <location>
        <begin position="103"/>
        <end position="200"/>
    </location>
</feature>
<name>MNMA_STRPF</name>
<keyword id="KW-0067">ATP-binding</keyword>
<keyword id="KW-0963">Cytoplasm</keyword>
<keyword id="KW-1015">Disulfide bond</keyword>
<keyword id="KW-0547">Nucleotide-binding</keyword>
<keyword id="KW-0694">RNA-binding</keyword>
<keyword id="KW-0808">Transferase</keyword>
<keyword id="KW-0819">tRNA processing</keyword>
<keyword id="KW-0820">tRNA-binding</keyword>
<accession>Q1J455</accession>
<gene>
    <name evidence="1" type="primary">mnmA</name>
    <name type="ordered locus">MGAS10750_Spy1956</name>
</gene>
<proteinExistence type="inferred from homology"/>
<dbReference type="EC" id="2.8.1.13" evidence="1"/>
<dbReference type="EMBL" id="CP000262">
    <property type="protein sequence ID" value="ABF38906.1"/>
    <property type="status" value="ALT_INIT"/>
    <property type="molecule type" value="Genomic_DNA"/>
</dbReference>
<dbReference type="SMR" id="Q1J455"/>
<dbReference type="KEGG" id="spi:MGAS10750_Spy1956"/>
<dbReference type="HOGENOM" id="CLU_035188_1_0_9"/>
<dbReference type="Proteomes" id="UP000002434">
    <property type="component" value="Chromosome"/>
</dbReference>
<dbReference type="GO" id="GO:0005737">
    <property type="term" value="C:cytoplasm"/>
    <property type="evidence" value="ECO:0007669"/>
    <property type="project" value="UniProtKB-SubCell"/>
</dbReference>
<dbReference type="GO" id="GO:0005524">
    <property type="term" value="F:ATP binding"/>
    <property type="evidence" value="ECO:0007669"/>
    <property type="project" value="UniProtKB-KW"/>
</dbReference>
<dbReference type="GO" id="GO:0000049">
    <property type="term" value="F:tRNA binding"/>
    <property type="evidence" value="ECO:0007669"/>
    <property type="project" value="UniProtKB-KW"/>
</dbReference>
<dbReference type="GO" id="GO:0103016">
    <property type="term" value="F:tRNA-uridine 2-sulfurtransferase activity"/>
    <property type="evidence" value="ECO:0007669"/>
    <property type="project" value="UniProtKB-EC"/>
</dbReference>
<dbReference type="GO" id="GO:0002143">
    <property type="term" value="P:tRNA wobble position uridine thiolation"/>
    <property type="evidence" value="ECO:0007669"/>
    <property type="project" value="TreeGrafter"/>
</dbReference>
<dbReference type="CDD" id="cd01998">
    <property type="entry name" value="MnmA_TRMU-like"/>
    <property type="match status" value="1"/>
</dbReference>
<dbReference type="FunFam" id="2.30.30.280:FF:000001">
    <property type="entry name" value="tRNA-specific 2-thiouridylase MnmA"/>
    <property type="match status" value="1"/>
</dbReference>
<dbReference type="FunFam" id="2.40.30.10:FF:000023">
    <property type="entry name" value="tRNA-specific 2-thiouridylase MnmA"/>
    <property type="match status" value="1"/>
</dbReference>
<dbReference type="FunFam" id="3.40.50.620:FF:000004">
    <property type="entry name" value="tRNA-specific 2-thiouridylase MnmA"/>
    <property type="match status" value="1"/>
</dbReference>
<dbReference type="Gene3D" id="2.30.30.280">
    <property type="entry name" value="Adenine nucleotide alpha hydrolases-like domains"/>
    <property type="match status" value="1"/>
</dbReference>
<dbReference type="Gene3D" id="3.40.50.620">
    <property type="entry name" value="HUPs"/>
    <property type="match status" value="1"/>
</dbReference>
<dbReference type="Gene3D" id="2.40.30.10">
    <property type="entry name" value="Translation factors"/>
    <property type="match status" value="1"/>
</dbReference>
<dbReference type="HAMAP" id="MF_00144">
    <property type="entry name" value="tRNA_thiouridyl_MnmA"/>
    <property type="match status" value="1"/>
</dbReference>
<dbReference type="InterPro" id="IPR004506">
    <property type="entry name" value="MnmA-like"/>
</dbReference>
<dbReference type="InterPro" id="IPR046885">
    <property type="entry name" value="MnmA-like_C"/>
</dbReference>
<dbReference type="InterPro" id="IPR046884">
    <property type="entry name" value="MnmA-like_central"/>
</dbReference>
<dbReference type="InterPro" id="IPR023382">
    <property type="entry name" value="MnmA-like_central_sf"/>
</dbReference>
<dbReference type="InterPro" id="IPR014729">
    <property type="entry name" value="Rossmann-like_a/b/a_fold"/>
</dbReference>
<dbReference type="NCBIfam" id="NF001138">
    <property type="entry name" value="PRK00143.1"/>
    <property type="match status" value="1"/>
</dbReference>
<dbReference type="NCBIfam" id="TIGR00420">
    <property type="entry name" value="trmU"/>
    <property type="match status" value="1"/>
</dbReference>
<dbReference type="PANTHER" id="PTHR11933:SF5">
    <property type="entry name" value="MITOCHONDRIAL TRNA-SPECIFIC 2-THIOURIDYLASE 1"/>
    <property type="match status" value="1"/>
</dbReference>
<dbReference type="PANTHER" id="PTHR11933">
    <property type="entry name" value="TRNA 5-METHYLAMINOMETHYL-2-THIOURIDYLATE -METHYLTRANSFERASE"/>
    <property type="match status" value="1"/>
</dbReference>
<dbReference type="Pfam" id="PF03054">
    <property type="entry name" value="tRNA_Me_trans"/>
    <property type="match status" value="1"/>
</dbReference>
<dbReference type="Pfam" id="PF20258">
    <property type="entry name" value="tRNA_Me_trans_C"/>
    <property type="match status" value="1"/>
</dbReference>
<dbReference type="Pfam" id="PF20259">
    <property type="entry name" value="tRNA_Me_trans_M"/>
    <property type="match status" value="1"/>
</dbReference>
<dbReference type="SUPFAM" id="SSF52402">
    <property type="entry name" value="Adenine nucleotide alpha hydrolases-like"/>
    <property type="match status" value="1"/>
</dbReference>
<evidence type="ECO:0000255" key="1">
    <source>
        <dbReference type="HAMAP-Rule" id="MF_00144"/>
    </source>
</evidence>
<evidence type="ECO:0000305" key="2"/>
<comment type="function">
    <text evidence="1">Catalyzes the 2-thiolation of uridine at the wobble position (U34) of tRNA, leading to the formation of s(2)U34.</text>
</comment>
<comment type="catalytic activity">
    <reaction evidence="1">
        <text>S-sulfanyl-L-cysteinyl-[protein] + uridine(34) in tRNA + AH2 + ATP = 2-thiouridine(34) in tRNA + L-cysteinyl-[protein] + A + AMP + diphosphate + H(+)</text>
        <dbReference type="Rhea" id="RHEA:47032"/>
        <dbReference type="Rhea" id="RHEA-COMP:10131"/>
        <dbReference type="Rhea" id="RHEA-COMP:11726"/>
        <dbReference type="Rhea" id="RHEA-COMP:11727"/>
        <dbReference type="Rhea" id="RHEA-COMP:11728"/>
        <dbReference type="ChEBI" id="CHEBI:13193"/>
        <dbReference type="ChEBI" id="CHEBI:15378"/>
        <dbReference type="ChEBI" id="CHEBI:17499"/>
        <dbReference type="ChEBI" id="CHEBI:29950"/>
        <dbReference type="ChEBI" id="CHEBI:30616"/>
        <dbReference type="ChEBI" id="CHEBI:33019"/>
        <dbReference type="ChEBI" id="CHEBI:61963"/>
        <dbReference type="ChEBI" id="CHEBI:65315"/>
        <dbReference type="ChEBI" id="CHEBI:87170"/>
        <dbReference type="ChEBI" id="CHEBI:456215"/>
        <dbReference type="EC" id="2.8.1.13"/>
    </reaction>
</comment>
<comment type="subcellular location">
    <subcellularLocation>
        <location evidence="1">Cytoplasm</location>
    </subcellularLocation>
</comment>
<comment type="similarity">
    <text evidence="1">Belongs to the MnmA/TRMU family.</text>
</comment>
<comment type="sequence caution" evidence="2">
    <conflict type="erroneous initiation">
        <sequence resource="EMBL-CDS" id="ABF38906"/>
    </conflict>
</comment>
<reference key="1">
    <citation type="journal article" date="2006" name="Proc. Natl. Acad. Sci. U.S.A.">
        <title>Molecular genetic anatomy of inter- and intraserotype variation in the human bacterial pathogen group A Streptococcus.</title>
        <authorList>
            <person name="Beres S.B."/>
            <person name="Richter E.W."/>
            <person name="Nagiec M.J."/>
            <person name="Sumby P."/>
            <person name="Porcella S.F."/>
            <person name="DeLeo F.R."/>
            <person name="Musser J.M."/>
        </authorList>
    </citation>
    <scope>NUCLEOTIDE SEQUENCE [LARGE SCALE GENOMIC DNA]</scope>
    <source>
        <strain>MGAS10750</strain>
    </source>
</reference>
<organism>
    <name type="scientific">Streptococcus pyogenes serotype M4 (strain MGAS10750)</name>
    <dbReference type="NCBI Taxonomy" id="370554"/>
    <lineage>
        <taxon>Bacteria</taxon>
        <taxon>Bacillati</taxon>
        <taxon>Bacillota</taxon>
        <taxon>Bacilli</taxon>
        <taxon>Lactobacillales</taxon>
        <taxon>Streptococcaceae</taxon>
        <taxon>Streptococcus</taxon>
    </lineage>
</organism>